<keyword id="KW-0028">Amino-acid biosynthesis</keyword>
<keyword id="KW-0963">Cytoplasm</keyword>
<keyword id="KW-0368">Histidine biosynthesis</keyword>
<keyword id="KW-0456">Lyase</keyword>
<feature type="chain" id="PRO_1000010342" description="Imidazoleglycerol-phosphate dehydratase">
    <location>
        <begin position="1"/>
        <end position="197"/>
    </location>
</feature>
<comment type="catalytic activity">
    <reaction evidence="1">
        <text>D-erythro-1-(imidazol-4-yl)glycerol 3-phosphate = 3-(imidazol-4-yl)-2-oxopropyl phosphate + H2O</text>
        <dbReference type="Rhea" id="RHEA:11040"/>
        <dbReference type="ChEBI" id="CHEBI:15377"/>
        <dbReference type="ChEBI" id="CHEBI:57766"/>
        <dbReference type="ChEBI" id="CHEBI:58278"/>
        <dbReference type="EC" id="4.2.1.19"/>
    </reaction>
</comment>
<comment type="pathway">
    <text evidence="1">Amino-acid biosynthesis; L-histidine biosynthesis; L-histidine from 5-phospho-alpha-D-ribose 1-diphosphate: step 6/9.</text>
</comment>
<comment type="subcellular location">
    <subcellularLocation>
        <location evidence="1">Cytoplasm</location>
    </subcellularLocation>
</comment>
<comment type="similarity">
    <text evidence="1">Belongs to the imidazoleglycerol-phosphate dehydratase family.</text>
</comment>
<protein>
    <recommendedName>
        <fullName evidence="1">Imidazoleglycerol-phosphate dehydratase</fullName>
        <shortName evidence="1">IGPD</shortName>
        <ecNumber evidence="1">4.2.1.19</ecNumber>
    </recommendedName>
</protein>
<dbReference type="EC" id="4.2.1.19" evidence="1"/>
<dbReference type="EMBL" id="CP000463">
    <property type="protein sequence ID" value="ABJ04329.1"/>
    <property type="molecule type" value="Genomic_DNA"/>
</dbReference>
<dbReference type="SMR" id="Q07UQ5"/>
<dbReference type="STRING" id="316055.RPE_0370"/>
<dbReference type="KEGG" id="rpe:RPE_0370"/>
<dbReference type="eggNOG" id="COG0131">
    <property type="taxonomic scope" value="Bacteria"/>
</dbReference>
<dbReference type="HOGENOM" id="CLU_044308_3_0_5"/>
<dbReference type="OrthoDB" id="9813612at2"/>
<dbReference type="UniPathway" id="UPA00031">
    <property type="reaction ID" value="UER00011"/>
</dbReference>
<dbReference type="GO" id="GO:0005737">
    <property type="term" value="C:cytoplasm"/>
    <property type="evidence" value="ECO:0007669"/>
    <property type="project" value="UniProtKB-SubCell"/>
</dbReference>
<dbReference type="GO" id="GO:0004424">
    <property type="term" value="F:imidazoleglycerol-phosphate dehydratase activity"/>
    <property type="evidence" value="ECO:0007669"/>
    <property type="project" value="UniProtKB-UniRule"/>
</dbReference>
<dbReference type="GO" id="GO:0000105">
    <property type="term" value="P:L-histidine biosynthetic process"/>
    <property type="evidence" value="ECO:0007669"/>
    <property type="project" value="UniProtKB-UniRule"/>
</dbReference>
<dbReference type="CDD" id="cd07914">
    <property type="entry name" value="IGPD"/>
    <property type="match status" value="1"/>
</dbReference>
<dbReference type="FunFam" id="3.30.230.40:FF:000001">
    <property type="entry name" value="Imidazoleglycerol-phosphate dehydratase HisB"/>
    <property type="match status" value="1"/>
</dbReference>
<dbReference type="FunFam" id="3.30.230.40:FF:000003">
    <property type="entry name" value="Imidazoleglycerol-phosphate dehydratase HisB"/>
    <property type="match status" value="1"/>
</dbReference>
<dbReference type="Gene3D" id="3.30.230.40">
    <property type="entry name" value="Imidazole glycerol phosphate dehydratase, domain 1"/>
    <property type="match status" value="2"/>
</dbReference>
<dbReference type="HAMAP" id="MF_00076">
    <property type="entry name" value="HisB"/>
    <property type="match status" value="1"/>
</dbReference>
<dbReference type="InterPro" id="IPR038494">
    <property type="entry name" value="IGPD_sf"/>
</dbReference>
<dbReference type="InterPro" id="IPR000807">
    <property type="entry name" value="ImidazoleglycerolP_deHydtase"/>
</dbReference>
<dbReference type="InterPro" id="IPR020565">
    <property type="entry name" value="ImidazoleglycerP_deHydtase_CS"/>
</dbReference>
<dbReference type="InterPro" id="IPR020568">
    <property type="entry name" value="Ribosomal_Su5_D2-typ_SF"/>
</dbReference>
<dbReference type="NCBIfam" id="NF002109">
    <property type="entry name" value="PRK00951.1-5"/>
    <property type="match status" value="1"/>
</dbReference>
<dbReference type="NCBIfam" id="NF002111">
    <property type="entry name" value="PRK00951.2-1"/>
    <property type="match status" value="1"/>
</dbReference>
<dbReference type="NCBIfam" id="NF002114">
    <property type="entry name" value="PRK00951.2-4"/>
    <property type="match status" value="1"/>
</dbReference>
<dbReference type="PANTHER" id="PTHR23133:SF2">
    <property type="entry name" value="IMIDAZOLEGLYCEROL-PHOSPHATE DEHYDRATASE"/>
    <property type="match status" value="1"/>
</dbReference>
<dbReference type="PANTHER" id="PTHR23133">
    <property type="entry name" value="IMIDAZOLEGLYCEROL-PHOSPHATE DEHYDRATASE HIS7"/>
    <property type="match status" value="1"/>
</dbReference>
<dbReference type="Pfam" id="PF00475">
    <property type="entry name" value="IGPD"/>
    <property type="match status" value="1"/>
</dbReference>
<dbReference type="SUPFAM" id="SSF54211">
    <property type="entry name" value="Ribosomal protein S5 domain 2-like"/>
    <property type="match status" value="2"/>
</dbReference>
<dbReference type="PROSITE" id="PS00954">
    <property type="entry name" value="IGP_DEHYDRATASE_1"/>
    <property type="match status" value="1"/>
</dbReference>
<dbReference type="PROSITE" id="PS00955">
    <property type="entry name" value="IGP_DEHYDRATASE_2"/>
    <property type="match status" value="1"/>
</dbReference>
<reference key="1">
    <citation type="submission" date="2006-09" db="EMBL/GenBank/DDBJ databases">
        <title>Complete sequence of Rhodopseudomonas palustris BisA53.</title>
        <authorList>
            <consortium name="US DOE Joint Genome Institute"/>
            <person name="Copeland A."/>
            <person name="Lucas S."/>
            <person name="Lapidus A."/>
            <person name="Barry K."/>
            <person name="Detter J.C."/>
            <person name="Glavina del Rio T."/>
            <person name="Hammon N."/>
            <person name="Israni S."/>
            <person name="Dalin E."/>
            <person name="Tice H."/>
            <person name="Pitluck S."/>
            <person name="Chain P."/>
            <person name="Malfatti S."/>
            <person name="Shin M."/>
            <person name="Vergez L."/>
            <person name="Schmutz J."/>
            <person name="Larimer F."/>
            <person name="Land M."/>
            <person name="Hauser L."/>
            <person name="Pelletier D.A."/>
            <person name="Kyrpides N."/>
            <person name="Kim E."/>
            <person name="Harwood C.S."/>
            <person name="Oda Y."/>
            <person name="Richardson P."/>
        </authorList>
    </citation>
    <scope>NUCLEOTIDE SEQUENCE [LARGE SCALE GENOMIC DNA]</scope>
    <source>
        <strain>BisA53</strain>
    </source>
</reference>
<evidence type="ECO:0000255" key="1">
    <source>
        <dbReference type="HAMAP-Rule" id="MF_00076"/>
    </source>
</evidence>
<name>HIS7_RHOP5</name>
<organism>
    <name type="scientific">Rhodopseudomonas palustris (strain BisA53)</name>
    <dbReference type="NCBI Taxonomy" id="316055"/>
    <lineage>
        <taxon>Bacteria</taxon>
        <taxon>Pseudomonadati</taxon>
        <taxon>Pseudomonadota</taxon>
        <taxon>Alphaproteobacteria</taxon>
        <taxon>Hyphomicrobiales</taxon>
        <taxon>Nitrobacteraceae</taxon>
        <taxon>Rhodopseudomonas</taxon>
    </lineage>
</organism>
<sequence length="197" mass="21289">MRKATITRKTKETAIEVAVDLDGTGVSQVATGIGFFDHMLDLLARHSRIDIKVKADGDLHVDYHHTVEDVGIALGQAVKQALGSMAGITRYASLYMPMDETLTRVAIDISGRPALVFKAEFPRDKIGEFDTELVREWFNAFAGNAGITLHVETLYGENSHHIAESCFKGLARALRAAVAIDPRAAGEVPSTKGQLGG</sequence>
<proteinExistence type="inferred from homology"/>
<gene>
    <name evidence="1" type="primary">hisB</name>
    <name type="ordered locus">RPE_0370</name>
</gene>
<accession>Q07UQ5</accession>